<proteinExistence type="inferred from homology"/>
<name>MIAA_BLOFL</name>
<organism>
    <name type="scientific">Blochmanniella floridana</name>
    <dbReference type="NCBI Taxonomy" id="203907"/>
    <lineage>
        <taxon>Bacteria</taxon>
        <taxon>Pseudomonadati</taxon>
        <taxon>Pseudomonadota</taxon>
        <taxon>Gammaproteobacteria</taxon>
        <taxon>Enterobacterales</taxon>
        <taxon>Enterobacteriaceae</taxon>
        <taxon>ant endosymbionts</taxon>
        <taxon>Candidatus Blochmanniella</taxon>
    </lineage>
</organism>
<sequence length="323" mass="37538">MRKYFKERDVPFIIFLMGPTASGKTSVVIELKKQKLGIKIISVDSALVYKNMNIGTAKPSVDELEIAPHQLIDIRDPADCYSVSDFYHDAILEINKIIRSGYVPVLVGGTMLYFKTLLTGLYQLPGKSQNIRNDLIYEAQKIGWVNMYNKLKCIDPIVSKTIHCNDHKRIIRALEVFLSSGKTLTELKQKFLNQQSQRYKVLQFALMPSKREFLYNRIEQRFYKMLKSGFEDEVRLLFSRPDLHDGYQSSISCVGYRQMWEYLSGNVEYDQMIYKGIYATRRLVKNQLTWLKKWPNVHWLNGDNVLIAVNDMLSVLSKYSCVI</sequence>
<gene>
    <name evidence="1" type="primary">miaA</name>
    <name type="ordered locus">Bfl079</name>
</gene>
<keyword id="KW-0067">ATP-binding</keyword>
<keyword id="KW-0460">Magnesium</keyword>
<keyword id="KW-0547">Nucleotide-binding</keyword>
<keyword id="KW-1185">Reference proteome</keyword>
<keyword id="KW-0808">Transferase</keyword>
<keyword id="KW-0819">tRNA processing</keyword>
<comment type="function">
    <text evidence="1">Catalyzes the transfer of a dimethylallyl group onto the adenine at position 37 in tRNAs that read codons beginning with uridine, leading to the formation of N6-(dimethylallyl)adenosine (i(6)A).</text>
</comment>
<comment type="catalytic activity">
    <reaction evidence="1">
        <text>adenosine(37) in tRNA + dimethylallyl diphosphate = N(6)-dimethylallyladenosine(37) in tRNA + diphosphate</text>
        <dbReference type="Rhea" id="RHEA:26482"/>
        <dbReference type="Rhea" id="RHEA-COMP:10162"/>
        <dbReference type="Rhea" id="RHEA-COMP:10375"/>
        <dbReference type="ChEBI" id="CHEBI:33019"/>
        <dbReference type="ChEBI" id="CHEBI:57623"/>
        <dbReference type="ChEBI" id="CHEBI:74411"/>
        <dbReference type="ChEBI" id="CHEBI:74415"/>
        <dbReference type="EC" id="2.5.1.75"/>
    </reaction>
</comment>
<comment type="cofactor">
    <cofactor evidence="1">
        <name>Mg(2+)</name>
        <dbReference type="ChEBI" id="CHEBI:18420"/>
    </cofactor>
</comment>
<comment type="subunit">
    <text evidence="1">Monomer.</text>
</comment>
<comment type="similarity">
    <text evidence="1">Belongs to the IPP transferase family.</text>
</comment>
<dbReference type="EC" id="2.5.1.75" evidence="1"/>
<dbReference type="EMBL" id="BX248583">
    <property type="protein sequence ID" value="CAD83602.1"/>
    <property type="molecule type" value="Genomic_DNA"/>
</dbReference>
<dbReference type="SMR" id="Q7U347"/>
<dbReference type="STRING" id="203907.Bfl079"/>
<dbReference type="KEGG" id="bfl:Bfl079"/>
<dbReference type="eggNOG" id="COG0324">
    <property type="taxonomic scope" value="Bacteria"/>
</dbReference>
<dbReference type="HOGENOM" id="CLU_032616_0_0_6"/>
<dbReference type="OrthoDB" id="9776390at2"/>
<dbReference type="Proteomes" id="UP000002192">
    <property type="component" value="Chromosome"/>
</dbReference>
<dbReference type="GO" id="GO:0005524">
    <property type="term" value="F:ATP binding"/>
    <property type="evidence" value="ECO:0007669"/>
    <property type="project" value="UniProtKB-UniRule"/>
</dbReference>
<dbReference type="GO" id="GO:0052381">
    <property type="term" value="F:tRNA dimethylallyltransferase activity"/>
    <property type="evidence" value="ECO:0007669"/>
    <property type="project" value="UniProtKB-UniRule"/>
</dbReference>
<dbReference type="GO" id="GO:0006400">
    <property type="term" value="P:tRNA modification"/>
    <property type="evidence" value="ECO:0007669"/>
    <property type="project" value="TreeGrafter"/>
</dbReference>
<dbReference type="Gene3D" id="1.10.20.140">
    <property type="match status" value="1"/>
</dbReference>
<dbReference type="Gene3D" id="3.40.50.300">
    <property type="entry name" value="P-loop containing nucleotide triphosphate hydrolases"/>
    <property type="match status" value="1"/>
</dbReference>
<dbReference type="HAMAP" id="MF_00185">
    <property type="entry name" value="IPP_trans"/>
    <property type="match status" value="1"/>
</dbReference>
<dbReference type="InterPro" id="IPR039657">
    <property type="entry name" value="Dimethylallyltransferase"/>
</dbReference>
<dbReference type="InterPro" id="IPR018022">
    <property type="entry name" value="IPT"/>
</dbReference>
<dbReference type="InterPro" id="IPR027417">
    <property type="entry name" value="P-loop_NTPase"/>
</dbReference>
<dbReference type="NCBIfam" id="TIGR00174">
    <property type="entry name" value="miaA"/>
    <property type="match status" value="1"/>
</dbReference>
<dbReference type="PANTHER" id="PTHR11088">
    <property type="entry name" value="TRNA DIMETHYLALLYLTRANSFERASE"/>
    <property type="match status" value="1"/>
</dbReference>
<dbReference type="PANTHER" id="PTHR11088:SF60">
    <property type="entry name" value="TRNA DIMETHYLALLYLTRANSFERASE"/>
    <property type="match status" value="1"/>
</dbReference>
<dbReference type="Pfam" id="PF01715">
    <property type="entry name" value="IPPT"/>
    <property type="match status" value="1"/>
</dbReference>
<dbReference type="SUPFAM" id="SSF52540">
    <property type="entry name" value="P-loop containing nucleoside triphosphate hydrolases"/>
    <property type="match status" value="1"/>
</dbReference>
<accession>Q7U347</accession>
<feature type="chain" id="PRO_0000163895" description="tRNA dimethylallyltransferase">
    <location>
        <begin position="1"/>
        <end position="323"/>
    </location>
</feature>
<feature type="region of interest" description="Interaction with substrate tRNA" evidence="1">
    <location>
        <begin position="44"/>
        <end position="47"/>
    </location>
</feature>
<feature type="binding site" evidence="1">
    <location>
        <begin position="18"/>
        <end position="25"/>
    </location>
    <ligand>
        <name>ATP</name>
        <dbReference type="ChEBI" id="CHEBI:30616"/>
    </ligand>
</feature>
<feature type="binding site" evidence="1">
    <location>
        <begin position="20"/>
        <end position="25"/>
    </location>
    <ligand>
        <name>substrate</name>
    </ligand>
</feature>
<feature type="site" description="Interaction with substrate tRNA" evidence="1">
    <location>
        <position position="110"/>
    </location>
</feature>
<feature type="site" description="Interaction with substrate tRNA" evidence="1">
    <location>
        <position position="132"/>
    </location>
</feature>
<protein>
    <recommendedName>
        <fullName evidence="1">tRNA dimethylallyltransferase</fullName>
        <ecNumber evidence="1">2.5.1.75</ecNumber>
    </recommendedName>
    <alternativeName>
        <fullName evidence="1">Dimethylallyl diphosphate:tRNA dimethylallyltransferase</fullName>
        <shortName evidence="1">DMAPP:tRNA dimethylallyltransferase</shortName>
        <shortName evidence="1">DMATase</shortName>
    </alternativeName>
    <alternativeName>
        <fullName evidence="1">Isopentenyl-diphosphate:tRNA isopentenyltransferase</fullName>
        <shortName evidence="1">IPP transferase</shortName>
        <shortName evidence="1">IPPT</shortName>
        <shortName evidence="1">IPTase</shortName>
    </alternativeName>
</protein>
<evidence type="ECO:0000255" key="1">
    <source>
        <dbReference type="HAMAP-Rule" id="MF_00185"/>
    </source>
</evidence>
<reference key="1">
    <citation type="journal article" date="2003" name="Proc. Natl. Acad. Sci. U.S.A.">
        <title>The genome sequence of Blochmannia floridanus: comparative analysis of reduced genomes.</title>
        <authorList>
            <person name="Gil R."/>
            <person name="Silva F.J."/>
            <person name="Zientz E."/>
            <person name="Delmotte F."/>
            <person name="Gonzalez-Candelas F."/>
            <person name="Latorre A."/>
            <person name="Rausell C."/>
            <person name="Kamerbeek J."/>
            <person name="Gadau J."/>
            <person name="Hoelldobler B."/>
            <person name="van Ham R.C.H.J."/>
            <person name="Gross R."/>
            <person name="Moya A."/>
        </authorList>
    </citation>
    <scope>NUCLEOTIDE SEQUENCE [LARGE SCALE GENOMIC DNA]</scope>
</reference>